<keyword id="KW-0378">Hydrolase</keyword>
<keyword id="KW-1185">Reference proteome</keyword>
<accession>B7UHP7</accession>
<sequence length="176" mass="20795">MIDDDGYRPNVGIVICNRQGQVMWARRFGQHSWQFPQGGINPGESAEQAMYRELFEEVGLSRKDVRILASTRNWLRYKLPKRLVRWDTKPVCIGQKQKWFLLQLVSGDAEINMQTSSTPEFDGWRWVSYWYPVRQVVSFKRDVYRRVMKEFASVVMSLQENTPKPQNASAYRRKRG</sequence>
<proteinExistence type="inferred from homology"/>
<dbReference type="EC" id="3.6.1.-" evidence="1"/>
<dbReference type="EMBL" id="FM180568">
    <property type="protein sequence ID" value="CAS10647.1"/>
    <property type="molecule type" value="Genomic_DNA"/>
</dbReference>
<dbReference type="RefSeq" id="WP_000564489.1">
    <property type="nucleotide sequence ID" value="NC_011601.1"/>
</dbReference>
<dbReference type="SMR" id="B7UHP7"/>
<dbReference type="GeneID" id="75203778"/>
<dbReference type="KEGG" id="ecg:E2348C_3099"/>
<dbReference type="HOGENOM" id="CLU_087195_3_2_6"/>
<dbReference type="Proteomes" id="UP000008205">
    <property type="component" value="Chromosome"/>
</dbReference>
<dbReference type="GO" id="GO:0005737">
    <property type="term" value="C:cytoplasm"/>
    <property type="evidence" value="ECO:0007669"/>
    <property type="project" value="TreeGrafter"/>
</dbReference>
<dbReference type="GO" id="GO:0034353">
    <property type="term" value="F:mRNA 5'-diphosphatase activity"/>
    <property type="evidence" value="ECO:0007669"/>
    <property type="project" value="TreeGrafter"/>
</dbReference>
<dbReference type="GO" id="GO:0006402">
    <property type="term" value="P:mRNA catabolic process"/>
    <property type="evidence" value="ECO:0007669"/>
    <property type="project" value="TreeGrafter"/>
</dbReference>
<dbReference type="CDD" id="cd03671">
    <property type="entry name" value="NUDIX_Ap4A_hydrolase_plant_like"/>
    <property type="match status" value="1"/>
</dbReference>
<dbReference type="FunFam" id="3.90.79.10:FF:000001">
    <property type="entry name" value="RNA pyrophosphohydrolase"/>
    <property type="match status" value="1"/>
</dbReference>
<dbReference type="Gene3D" id="3.90.79.10">
    <property type="entry name" value="Nucleoside Triphosphate Pyrophosphohydrolase"/>
    <property type="match status" value="1"/>
</dbReference>
<dbReference type="HAMAP" id="MF_00298">
    <property type="entry name" value="Nudix_RppH"/>
    <property type="match status" value="1"/>
</dbReference>
<dbReference type="InterPro" id="IPR020476">
    <property type="entry name" value="Nudix_hydrolase"/>
</dbReference>
<dbReference type="InterPro" id="IPR015797">
    <property type="entry name" value="NUDIX_hydrolase-like_dom_sf"/>
</dbReference>
<dbReference type="InterPro" id="IPR020084">
    <property type="entry name" value="NUDIX_hydrolase_CS"/>
</dbReference>
<dbReference type="InterPro" id="IPR000086">
    <property type="entry name" value="NUDIX_hydrolase_dom"/>
</dbReference>
<dbReference type="InterPro" id="IPR022927">
    <property type="entry name" value="RppH"/>
</dbReference>
<dbReference type="NCBIfam" id="NF001934">
    <property type="entry name" value="PRK00714.1-1"/>
    <property type="match status" value="1"/>
</dbReference>
<dbReference type="NCBIfam" id="NF001937">
    <property type="entry name" value="PRK00714.1-4"/>
    <property type="match status" value="1"/>
</dbReference>
<dbReference type="NCBIfam" id="NF001938">
    <property type="entry name" value="PRK00714.1-5"/>
    <property type="match status" value="1"/>
</dbReference>
<dbReference type="PANTHER" id="PTHR23114">
    <property type="entry name" value="M7GPPPN-MRNA HYDROLASE"/>
    <property type="match status" value="1"/>
</dbReference>
<dbReference type="PANTHER" id="PTHR23114:SF17">
    <property type="entry name" value="M7GPPPN-MRNA HYDROLASE"/>
    <property type="match status" value="1"/>
</dbReference>
<dbReference type="Pfam" id="PF00293">
    <property type="entry name" value="NUDIX"/>
    <property type="match status" value="1"/>
</dbReference>
<dbReference type="PRINTS" id="PR00502">
    <property type="entry name" value="NUDIXFAMILY"/>
</dbReference>
<dbReference type="SUPFAM" id="SSF55811">
    <property type="entry name" value="Nudix"/>
    <property type="match status" value="1"/>
</dbReference>
<dbReference type="PROSITE" id="PS51462">
    <property type="entry name" value="NUDIX"/>
    <property type="match status" value="1"/>
</dbReference>
<dbReference type="PROSITE" id="PS00893">
    <property type="entry name" value="NUDIX_BOX"/>
    <property type="match status" value="1"/>
</dbReference>
<evidence type="ECO:0000255" key="1">
    <source>
        <dbReference type="HAMAP-Rule" id="MF_00298"/>
    </source>
</evidence>
<organism>
    <name type="scientific">Escherichia coli O127:H6 (strain E2348/69 / EPEC)</name>
    <dbReference type="NCBI Taxonomy" id="574521"/>
    <lineage>
        <taxon>Bacteria</taxon>
        <taxon>Pseudomonadati</taxon>
        <taxon>Pseudomonadota</taxon>
        <taxon>Gammaproteobacteria</taxon>
        <taxon>Enterobacterales</taxon>
        <taxon>Enterobacteriaceae</taxon>
        <taxon>Escherichia</taxon>
    </lineage>
</organism>
<feature type="chain" id="PRO_1000191843" description="RNA pyrophosphohydrolase">
    <location>
        <begin position="1"/>
        <end position="176"/>
    </location>
</feature>
<feature type="domain" description="Nudix hydrolase" evidence="1">
    <location>
        <begin position="6"/>
        <end position="149"/>
    </location>
</feature>
<feature type="short sequence motif" description="Nudix box">
    <location>
        <begin position="38"/>
        <end position="59"/>
    </location>
</feature>
<gene>
    <name evidence="1" type="primary">rppH</name>
    <name evidence="1" type="synonym">nudH</name>
    <name type="ordered locus">E2348C_3099</name>
</gene>
<protein>
    <recommendedName>
        <fullName evidence="1">RNA pyrophosphohydrolase</fullName>
        <ecNumber evidence="1">3.6.1.-</ecNumber>
    </recommendedName>
    <alternativeName>
        <fullName evidence="1">(Di)nucleoside polyphosphate hydrolase</fullName>
    </alternativeName>
</protein>
<reference key="1">
    <citation type="journal article" date="2009" name="J. Bacteriol.">
        <title>Complete genome sequence and comparative genome analysis of enteropathogenic Escherichia coli O127:H6 strain E2348/69.</title>
        <authorList>
            <person name="Iguchi A."/>
            <person name="Thomson N.R."/>
            <person name="Ogura Y."/>
            <person name="Saunders D."/>
            <person name="Ooka T."/>
            <person name="Henderson I.R."/>
            <person name="Harris D."/>
            <person name="Asadulghani M."/>
            <person name="Kurokawa K."/>
            <person name="Dean P."/>
            <person name="Kenny B."/>
            <person name="Quail M.A."/>
            <person name="Thurston S."/>
            <person name="Dougan G."/>
            <person name="Hayashi T."/>
            <person name="Parkhill J."/>
            <person name="Frankel G."/>
        </authorList>
    </citation>
    <scope>NUCLEOTIDE SEQUENCE [LARGE SCALE GENOMIC DNA]</scope>
    <source>
        <strain>E2348/69 / EPEC</strain>
    </source>
</reference>
<comment type="function">
    <text evidence="1">Accelerates the degradation of transcripts by removing pyrophosphate from the 5'-end of triphosphorylated RNA, leading to a more labile monophosphorylated state that can stimulate subsequent ribonuclease cleavage.</text>
</comment>
<comment type="cofactor">
    <cofactor evidence="1">
        <name>a divalent metal cation</name>
        <dbReference type="ChEBI" id="CHEBI:60240"/>
    </cofactor>
</comment>
<comment type="similarity">
    <text evidence="1">Belongs to the Nudix hydrolase family. RppH subfamily.</text>
</comment>
<name>RPPH_ECO27</name>